<evidence type="ECO:0000255" key="1">
    <source>
        <dbReference type="HAMAP-Rule" id="MF_01536"/>
    </source>
</evidence>
<comment type="subcellular location">
    <subcellularLocation>
        <location evidence="1">Cell membrane</location>
        <topology evidence="1">Multi-pass membrane protein</topology>
    </subcellularLocation>
</comment>
<comment type="similarity">
    <text evidence="1">Belongs to the UPF0344 family.</text>
</comment>
<proteinExistence type="inferred from homology"/>
<accession>A6QFI0</accession>
<keyword id="KW-1003">Cell membrane</keyword>
<keyword id="KW-0472">Membrane</keyword>
<keyword id="KW-0812">Transmembrane</keyword>
<keyword id="KW-1133">Transmembrane helix</keyword>
<gene>
    <name type="ordered locus">NWMN_0840</name>
</gene>
<reference key="1">
    <citation type="journal article" date="2008" name="J. Bacteriol.">
        <title>Genome sequence of Staphylococcus aureus strain Newman and comparative analysis of staphylococcal genomes: polymorphism and evolution of two major pathogenicity islands.</title>
        <authorList>
            <person name="Baba T."/>
            <person name="Bae T."/>
            <person name="Schneewind O."/>
            <person name="Takeuchi F."/>
            <person name="Hiramatsu K."/>
        </authorList>
    </citation>
    <scope>NUCLEOTIDE SEQUENCE [LARGE SCALE GENOMIC DNA]</scope>
    <source>
        <strain>Newman</strain>
    </source>
</reference>
<sequence>MLHLHILSWVLAIILFIATYLNISKNQGRSPFFKPLHMILRLFMLLTLISGFWILIQSFMNGGANHMLLTLKMLCGVAVVGLMEVSIAKRKRHEQSHTMFWITIALIIITMVLGVILPLGPISKLFGIG</sequence>
<name>Y840_STAAE</name>
<protein>
    <recommendedName>
        <fullName evidence="1">UPF0344 protein NWMN_0840</fullName>
    </recommendedName>
</protein>
<dbReference type="EMBL" id="AP009351">
    <property type="protein sequence ID" value="BAF67112.1"/>
    <property type="molecule type" value="Genomic_DNA"/>
</dbReference>
<dbReference type="RefSeq" id="WP_000902817.1">
    <property type="nucleotide sequence ID" value="NZ_JBBIAE010000002.1"/>
</dbReference>
<dbReference type="SMR" id="A6QFI0"/>
<dbReference type="KEGG" id="sae:NWMN_0840"/>
<dbReference type="HOGENOM" id="CLU_146641_2_0_9"/>
<dbReference type="Proteomes" id="UP000006386">
    <property type="component" value="Chromosome"/>
</dbReference>
<dbReference type="GO" id="GO:0005886">
    <property type="term" value="C:plasma membrane"/>
    <property type="evidence" value="ECO:0007669"/>
    <property type="project" value="UniProtKB-SubCell"/>
</dbReference>
<dbReference type="HAMAP" id="MF_01536">
    <property type="entry name" value="UPF0344"/>
    <property type="match status" value="1"/>
</dbReference>
<dbReference type="InterPro" id="IPR010899">
    <property type="entry name" value="UPF0344"/>
</dbReference>
<dbReference type="NCBIfam" id="NF010195">
    <property type="entry name" value="PRK13673.1-2"/>
    <property type="match status" value="1"/>
</dbReference>
<dbReference type="NCBIfam" id="NF010199">
    <property type="entry name" value="PRK13673.1-6"/>
    <property type="match status" value="1"/>
</dbReference>
<dbReference type="Pfam" id="PF07457">
    <property type="entry name" value="DUF1516"/>
    <property type="match status" value="1"/>
</dbReference>
<organism>
    <name type="scientific">Staphylococcus aureus (strain Newman)</name>
    <dbReference type="NCBI Taxonomy" id="426430"/>
    <lineage>
        <taxon>Bacteria</taxon>
        <taxon>Bacillati</taxon>
        <taxon>Bacillota</taxon>
        <taxon>Bacilli</taxon>
        <taxon>Bacillales</taxon>
        <taxon>Staphylococcaceae</taxon>
        <taxon>Staphylococcus</taxon>
    </lineage>
</organism>
<feature type="chain" id="PRO_1000073548" description="UPF0344 protein NWMN_0840">
    <location>
        <begin position="1"/>
        <end position="129"/>
    </location>
</feature>
<feature type="transmembrane region" description="Helical" evidence="1">
    <location>
        <begin position="1"/>
        <end position="21"/>
    </location>
</feature>
<feature type="transmembrane region" description="Helical" evidence="1">
    <location>
        <begin position="36"/>
        <end position="56"/>
    </location>
</feature>
<feature type="transmembrane region" description="Helical" evidence="1">
    <location>
        <begin position="67"/>
        <end position="87"/>
    </location>
</feature>
<feature type="transmembrane region" description="Helical" evidence="1">
    <location>
        <begin position="99"/>
        <end position="119"/>
    </location>
</feature>